<sequence length="144" mass="16141">MQNILLLNGPNLNMLGKREPHIYGDQTLLEIEQRLKQQAIKQGYNLLCFQANGEEAIINRIHQAFGNIDFIIINPAAFTHTSIAIRDALLAVAIPFIEVHLSNICSRESFRHHSYFSDISQGIICGLGPKGYDYALDFAISSLK</sequence>
<feature type="chain" id="PRO_0000159902" description="3-dehydroquinate dehydratase">
    <location>
        <begin position="1"/>
        <end position="144"/>
    </location>
</feature>
<feature type="active site" description="Proton acceptor" evidence="1">
    <location>
        <position position="23"/>
    </location>
</feature>
<feature type="active site" description="Proton donor" evidence="1">
    <location>
        <position position="100"/>
    </location>
</feature>
<feature type="binding site" evidence="1">
    <location>
        <position position="74"/>
    </location>
    <ligand>
        <name>substrate</name>
    </ligand>
</feature>
<feature type="binding site" evidence="1">
    <location>
        <position position="80"/>
    </location>
    <ligand>
        <name>substrate</name>
    </ligand>
</feature>
<feature type="binding site" evidence="1">
    <location>
        <position position="87"/>
    </location>
    <ligand>
        <name>substrate</name>
    </ligand>
</feature>
<feature type="binding site" evidence="1">
    <location>
        <begin position="101"/>
        <end position="102"/>
    </location>
    <ligand>
        <name>substrate</name>
    </ligand>
</feature>
<feature type="binding site" evidence="1">
    <location>
        <position position="111"/>
    </location>
    <ligand>
        <name>substrate</name>
    </ligand>
</feature>
<feature type="site" description="Transition state stabilizer" evidence="1">
    <location>
        <position position="18"/>
    </location>
</feature>
<proteinExistence type="inferred from homology"/>
<reference key="1">
    <citation type="submission" date="2003-06" db="EMBL/GenBank/DDBJ databases">
        <title>The complete genome sequence of Haemophilus ducreyi.</title>
        <authorList>
            <person name="Munson R.S. Jr."/>
            <person name="Ray W.C."/>
            <person name="Mahairas G."/>
            <person name="Sabo P."/>
            <person name="Mungur R."/>
            <person name="Johnson L."/>
            <person name="Nguyen D."/>
            <person name="Wang J."/>
            <person name="Forst C."/>
            <person name="Hood L."/>
        </authorList>
    </citation>
    <scope>NUCLEOTIDE SEQUENCE [LARGE SCALE GENOMIC DNA]</scope>
    <source>
        <strain>35000HP / ATCC 700724</strain>
    </source>
</reference>
<accession>Q7VNC2</accession>
<gene>
    <name evidence="1" type="primary">aroQ</name>
    <name type="ordered locus">HD_0632</name>
</gene>
<keyword id="KW-0028">Amino-acid biosynthesis</keyword>
<keyword id="KW-0057">Aromatic amino acid biosynthesis</keyword>
<keyword id="KW-0456">Lyase</keyword>
<keyword id="KW-1185">Reference proteome</keyword>
<organism>
    <name type="scientific">Haemophilus ducreyi (strain 35000HP / ATCC 700724)</name>
    <dbReference type="NCBI Taxonomy" id="233412"/>
    <lineage>
        <taxon>Bacteria</taxon>
        <taxon>Pseudomonadati</taxon>
        <taxon>Pseudomonadota</taxon>
        <taxon>Gammaproteobacteria</taxon>
        <taxon>Pasteurellales</taxon>
        <taxon>Pasteurellaceae</taxon>
        <taxon>Haemophilus</taxon>
    </lineage>
</organism>
<comment type="function">
    <text evidence="1">Catalyzes a trans-dehydration via an enolate intermediate.</text>
</comment>
<comment type="catalytic activity">
    <reaction evidence="1">
        <text>3-dehydroquinate = 3-dehydroshikimate + H2O</text>
        <dbReference type="Rhea" id="RHEA:21096"/>
        <dbReference type="ChEBI" id="CHEBI:15377"/>
        <dbReference type="ChEBI" id="CHEBI:16630"/>
        <dbReference type="ChEBI" id="CHEBI:32364"/>
        <dbReference type="EC" id="4.2.1.10"/>
    </reaction>
</comment>
<comment type="pathway">
    <text evidence="1">Metabolic intermediate biosynthesis; chorismate biosynthesis; chorismate from D-erythrose 4-phosphate and phosphoenolpyruvate: step 3/7.</text>
</comment>
<comment type="subunit">
    <text evidence="1">Homododecamer.</text>
</comment>
<comment type="similarity">
    <text evidence="1">Belongs to the type-II 3-dehydroquinase family.</text>
</comment>
<evidence type="ECO:0000255" key="1">
    <source>
        <dbReference type="HAMAP-Rule" id="MF_00169"/>
    </source>
</evidence>
<protein>
    <recommendedName>
        <fullName evidence="1">3-dehydroquinate dehydratase</fullName>
        <shortName evidence="1">3-dehydroquinase</shortName>
        <ecNumber evidence="1">4.2.1.10</ecNumber>
    </recommendedName>
    <alternativeName>
        <fullName evidence="1">Type II DHQase</fullName>
    </alternativeName>
</protein>
<name>AROQ_HAEDU</name>
<dbReference type="EC" id="4.2.1.10" evidence="1"/>
<dbReference type="EMBL" id="AE017143">
    <property type="protein sequence ID" value="AAP95558.1"/>
    <property type="molecule type" value="Genomic_DNA"/>
</dbReference>
<dbReference type="RefSeq" id="WP_010944611.1">
    <property type="nucleotide sequence ID" value="NC_002940.2"/>
</dbReference>
<dbReference type="SMR" id="Q7VNC2"/>
<dbReference type="STRING" id="233412.HD_0632"/>
<dbReference type="GeneID" id="60733244"/>
<dbReference type="KEGG" id="hdu:HD_0632"/>
<dbReference type="eggNOG" id="COG0757">
    <property type="taxonomic scope" value="Bacteria"/>
</dbReference>
<dbReference type="HOGENOM" id="CLU_090968_1_0_6"/>
<dbReference type="OrthoDB" id="9790793at2"/>
<dbReference type="UniPathway" id="UPA00053">
    <property type="reaction ID" value="UER00086"/>
</dbReference>
<dbReference type="Proteomes" id="UP000001022">
    <property type="component" value="Chromosome"/>
</dbReference>
<dbReference type="GO" id="GO:0003855">
    <property type="term" value="F:3-dehydroquinate dehydratase activity"/>
    <property type="evidence" value="ECO:0007669"/>
    <property type="project" value="UniProtKB-UniRule"/>
</dbReference>
<dbReference type="GO" id="GO:0008652">
    <property type="term" value="P:amino acid biosynthetic process"/>
    <property type="evidence" value="ECO:0007669"/>
    <property type="project" value="UniProtKB-KW"/>
</dbReference>
<dbReference type="GO" id="GO:0009073">
    <property type="term" value="P:aromatic amino acid family biosynthetic process"/>
    <property type="evidence" value="ECO:0007669"/>
    <property type="project" value="UniProtKB-KW"/>
</dbReference>
<dbReference type="GO" id="GO:0009423">
    <property type="term" value="P:chorismate biosynthetic process"/>
    <property type="evidence" value="ECO:0007669"/>
    <property type="project" value="UniProtKB-UniRule"/>
</dbReference>
<dbReference type="GO" id="GO:0019631">
    <property type="term" value="P:quinate catabolic process"/>
    <property type="evidence" value="ECO:0007669"/>
    <property type="project" value="TreeGrafter"/>
</dbReference>
<dbReference type="CDD" id="cd00466">
    <property type="entry name" value="DHQase_II"/>
    <property type="match status" value="1"/>
</dbReference>
<dbReference type="Gene3D" id="3.40.50.9100">
    <property type="entry name" value="Dehydroquinase, class II"/>
    <property type="match status" value="1"/>
</dbReference>
<dbReference type="HAMAP" id="MF_00169">
    <property type="entry name" value="AroQ"/>
    <property type="match status" value="1"/>
</dbReference>
<dbReference type="InterPro" id="IPR001874">
    <property type="entry name" value="DHquinase_II"/>
</dbReference>
<dbReference type="InterPro" id="IPR018509">
    <property type="entry name" value="DHquinase_II_CS"/>
</dbReference>
<dbReference type="InterPro" id="IPR036441">
    <property type="entry name" value="DHquinase_II_sf"/>
</dbReference>
<dbReference type="NCBIfam" id="TIGR01088">
    <property type="entry name" value="aroQ"/>
    <property type="match status" value="1"/>
</dbReference>
<dbReference type="NCBIfam" id="NF003804">
    <property type="entry name" value="PRK05395.1-1"/>
    <property type="match status" value="1"/>
</dbReference>
<dbReference type="NCBIfam" id="NF003805">
    <property type="entry name" value="PRK05395.1-2"/>
    <property type="match status" value="1"/>
</dbReference>
<dbReference type="NCBIfam" id="NF003806">
    <property type="entry name" value="PRK05395.1-3"/>
    <property type="match status" value="1"/>
</dbReference>
<dbReference type="NCBIfam" id="NF003807">
    <property type="entry name" value="PRK05395.1-4"/>
    <property type="match status" value="1"/>
</dbReference>
<dbReference type="PANTHER" id="PTHR21272">
    <property type="entry name" value="CATABOLIC 3-DEHYDROQUINASE"/>
    <property type="match status" value="1"/>
</dbReference>
<dbReference type="PANTHER" id="PTHR21272:SF3">
    <property type="entry name" value="CATABOLIC 3-DEHYDROQUINASE"/>
    <property type="match status" value="1"/>
</dbReference>
<dbReference type="Pfam" id="PF01220">
    <property type="entry name" value="DHquinase_II"/>
    <property type="match status" value="1"/>
</dbReference>
<dbReference type="PIRSF" id="PIRSF001399">
    <property type="entry name" value="DHquinase_II"/>
    <property type="match status" value="1"/>
</dbReference>
<dbReference type="SUPFAM" id="SSF52304">
    <property type="entry name" value="Type II 3-dehydroquinate dehydratase"/>
    <property type="match status" value="1"/>
</dbReference>
<dbReference type="PROSITE" id="PS01029">
    <property type="entry name" value="DEHYDROQUINASE_II"/>
    <property type="match status" value="1"/>
</dbReference>